<comment type="function">
    <text evidence="1">Binds the 23S rRNA.</text>
</comment>
<comment type="subunit">
    <text evidence="1">Part of the 50S ribosomal subunit.</text>
</comment>
<comment type="subcellular location">
    <subcellularLocation>
        <location>Plastid</location>
        <location>Chloroplast</location>
    </subcellularLocation>
</comment>
<comment type="similarity">
    <text evidence="1">Belongs to the bacterial ribosomal protein bL31 family. Type A subfamily.</text>
</comment>
<evidence type="ECO:0000255" key="1">
    <source>
        <dbReference type="HAMAP-Rule" id="MF_00501"/>
    </source>
</evidence>
<evidence type="ECO:0000305" key="2"/>
<reference key="1">
    <citation type="journal article" date="2005" name="DNA Res.">
        <title>The complete plastid genome sequence of the haptophyte Emiliania huxleyi: a comparison to other plastid genomes.</title>
        <authorList>
            <person name="Sanchez-Puerta M.V."/>
            <person name="Bachvaroff T.R."/>
            <person name="Delwiche C.F."/>
        </authorList>
    </citation>
    <scope>NUCLEOTIDE SEQUENCE [LARGE SCALE GENOMIC DNA]</scope>
    <source>
        <strain>CCMP373 / CSIRO-CS-57 / BT6</strain>
    </source>
</reference>
<proteinExistence type="inferred from homology"/>
<geneLocation type="chloroplast"/>
<gene>
    <name evidence="1" type="primary">rpl31</name>
</gene>
<accession>Q4G345</accession>
<organism>
    <name type="scientific">Emiliania huxleyi</name>
    <name type="common">Coccolithophore</name>
    <name type="synonym">Pontosphaera huxleyi</name>
    <dbReference type="NCBI Taxonomy" id="2903"/>
    <lineage>
        <taxon>Eukaryota</taxon>
        <taxon>Haptista</taxon>
        <taxon>Haptophyta</taxon>
        <taxon>Prymnesiophyceae</taxon>
        <taxon>Isochrysidales</taxon>
        <taxon>Noelaerhabdaceae</taxon>
        <taxon>Emiliania</taxon>
    </lineage>
</organism>
<dbReference type="EMBL" id="AY741371">
    <property type="protein sequence ID" value="AAX13921.1"/>
    <property type="molecule type" value="Genomic_DNA"/>
</dbReference>
<dbReference type="RefSeq" id="YP_277422.1">
    <property type="nucleotide sequence ID" value="NC_007288.1"/>
</dbReference>
<dbReference type="STRING" id="2903.Q4G345"/>
<dbReference type="GeneID" id="3562525"/>
<dbReference type="GO" id="GO:0009507">
    <property type="term" value="C:chloroplast"/>
    <property type="evidence" value="ECO:0007669"/>
    <property type="project" value="UniProtKB-SubCell"/>
</dbReference>
<dbReference type="GO" id="GO:1990904">
    <property type="term" value="C:ribonucleoprotein complex"/>
    <property type="evidence" value="ECO:0007669"/>
    <property type="project" value="UniProtKB-KW"/>
</dbReference>
<dbReference type="GO" id="GO:0005840">
    <property type="term" value="C:ribosome"/>
    <property type="evidence" value="ECO:0007669"/>
    <property type="project" value="UniProtKB-KW"/>
</dbReference>
<dbReference type="GO" id="GO:0019843">
    <property type="term" value="F:rRNA binding"/>
    <property type="evidence" value="ECO:0007669"/>
    <property type="project" value="UniProtKB-KW"/>
</dbReference>
<dbReference type="GO" id="GO:0003735">
    <property type="term" value="F:structural constituent of ribosome"/>
    <property type="evidence" value="ECO:0007669"/>
    <property type="project" value="InterPro"/>
</dbReference>
<dbReference type="GO" id="GO:0006412">
    <property type="term" value="P:translation"/>
    <property type="evidence" value="ECO:0007669"/>
    <property type="project" value="UniProtKB-UniRule"/>
</dbReference>
<dbReference type="Gene3D" id="4.10.830.30">
    <property type="entry name" value="Ribosomal protein L31"/>
    <property type="match status" value="1"/>
</dbReference>
<dbReference type="HAMAP" id="MF_00501">
    <property type="entry name" value="Ribosomal_bL31_1"/>
    <property type="match status" value="1"/>
</dbReference>
<dbReference type="InterPro" id="IPR034704">
    <property type="entry name" value="Ribosomal_bL28/bL31-like_sf"/>
</dbReference>
<dbReference type="InterPro" id="IPR002150">
    <property type="entry name" value="Ribosomal_bL31"/>
</dbReference>
<dbReference type="InterPro" id="IPR027491">
    <property type="entry name" value="Ribosomal_bL31_A"/>
</dbReference>
<dbReference type="InterPro" id="IPR042105">
    <property type="entry name" value="Ribosomal_bL31_sf"/>
</dbReference>
<dbReference type="NCBIfam" id="TIGR00105">
    <property type="entry name" value="L31"/>
    <property type="match status" value="1"/>
</dbReference>
<dbReference type="NCBIfam" id="NF001809">
    <property type="entry name" value="PRK00528.1"/>
    <property type="match status" value="1"/>
</dbReference>
<dbReference type="PANTHER" id="PTHR33280">
    <property type="entry name" value="50S RIBOSOMAL PROTEIN L31, CHLOROPLASTIC"/>
    <property type="match status" value="1"/>
</dbReference>
<dbReference type="PANTHER" id="PTHR33280:SF1">
    <property type="entry name" value="LARGE RIBOSOMAL SUBUNIT PROTEIN BL31C"/>
    <property type="match status" value="1"/>
</dbReference>
<dbReference type="Pfam" id="PF01197">
    <property type="entry name" value="Ribosomal_L31"/>
    <property type="match status" value="1"/>
</dbReference>
<dbReference type="PRINTS" id="PR01249">
    <property type="entry name" value="RIBOSOMALL31"/>
</dbReference>
<dbReference type="SUPFAM" id="SSF143800">
    <property type="entry name" value="L28p-like"/>
    <property type="match status" value="1"/>
</dbReference>
<dbReference type="PROSITE" id="PS01143">
    <property type="entry name" value="RIBOSOMAL_L31"/>
    <property type="match status" value="1"/>
</dbReference>
<protein>
    <recommendedName>
        <fullName evidence="1">Large ribosomal subunit protein bL31c</fullName>
    </recommendedName>
    <alternativeName>
        <fullName evidence="2">50S ribosomal protein L31, chloroplastic</fullName>
    </alternativeName>
</protein>
<name>RK31_EMIHU</name>
<sequence>MPKSAIHPDWYPNAKVYCDGQLVMKVGATKPTLNVDIWSGNHPFYTGSQTIIDTEGRVERFMRKYGMETQ</sequence>
<keyword id="KW-0150">Chloroplast</keyword>
<keyword id="KW-0934">Plastid</keyword>
<keyword id="KW-0687">Ribonucleoprotein</keyword>
<keyword id="KW-0689">Ribosomal protein</keyword>
<keyword id="KW-0694">RNA-binding</keyword>
<keyword id="KW-0699">rRNA-binding</keyword>
<feature type="chain" id="PRO_0000259245" description="Large ribosomal subunit protein bL31c">
    <location>
        <begin position="1"/>
        <end position="70"/>
    </location>
</feature>